<accession>Q2JII9</accession>
<dbReference type="EC" id="2.7.7.23" evidence="2"/>
<dbReference type="EC" id="2.3.1.157" evidence="2"/>
<dbReference type="EMBL" id="CP000240">
    <property type="protein sequence ID" value="ABD03565.1"/>
    <property type="molecule type" value="Genomic_DNA"/>
</dbReference>
<dbReference type="SMR" id="Q2JII9"/>
<dbReference type="STRING" id="321332.CYB_2635"/>
<dbReference type="KEGG" id="cyb:CYB_2635"/>
<dbReference type="eggNOG" id="COG1207">
    <property type="taxonomic scope" value="Bacteria"/>
</dbReference>
<dbReference type="HOGENOM" id="CLU_029499_15_2_3"/>
<dbReference type="OrthoDB" id="9775031at2"/>
<dbReference type="UniPathway" id="UPA00113">
    <property type="reaction ID" value="UER00532"/>
</dbReference>
<dbReference type="UniPathway" id="UPA00113">
    <property type="reaction ID" value="UER00533"/>
</dbReference>
<dbReference type="UniPathway" id="UPA00973"/>
<dbReference type="Proteomes" id="UP000001938">
    <property type="component" value="Chromosome"/>
</dbReference>
<dbReference type="GO" id="GO:0031470">
    <property type="term" value="C:carboxysome"/>
    <property type="evidence" value="ECO:0007669"/>
    <property type="project" value="UniProtKB-ARBA"/>
</dbReference>
<dbReference type="GO" id="GO:0005737">
    <property type="term" value="C:cytoplasm"/>
    <property type="evidence" value="ECO:0007669"/>
    <property type="project" value="UniProtKB-SubCell"/>
</dbReference>
<dbReference type="GO" id="GO:0016020">
    <property type="term" value="C:membrane"/>
    <property type="evidence" value="ECO:0007669"/>
    <property type="project" value="GOC"/>
</dbReference>
<dbReference type="GO" id="GO:0019134">
    <property type="term" value="F:glucosamine-1-phosphate N-acetyltransferase activity"/>
    <property type="evidence" value="ECO:0007669"/>
    <property type="project" value="UniProtKB-UniRule"/>
</dbReference>
<dbReference type="GO" id="GO:0000287">
    <property type="term" value="F:magnesium ion binding"/>
    <property type="evidence" value="ECO:0007669"/>
    <property type="project" value="UniProtKB-UniRule"/>
</dbReference>
<dbReference type="GO" id="GO:0043886">
    <property type="term" value="F:structural constituent of carboxysome shell"/>
    <property type="evidence" value="ECO:0007669"/>
    <property type="project" value="UniProtKB-ARBA"/>
</dbReference>
<dbReference type="GO" id="GO:0003977">
    <property type="term" value="F:UDP-N-acetylglucosamine diphosphorylase activity"/>
    <property type="evidence" value="ECO:0007669"/>
    <property type="project" value="UniProtKB-UniRule"/>
</dbReference>
<dbReference type="GO" id="GO:0000902">
    <property type="term" value="P:cell morphogenesis"/>
    <property type="evidence" value="ECO:0007669"/>
    <property type="project" value="UniProtKB-UniRule"/>
</dbReference>
<dbReference type="GO" id="GO:0071555">
    <property type="term" value="P:cell wall organization"/>
    <property type="evidence" value="ECO:0007669"/>
    <property type="project" value="UniProtKB-KW"/>
</dbReference>
<dbReference type="GO" id="GO:0009245">
    <property type="term" value="P:lipid A biosynthetic process"/>
    <property type="evidence" value="ECO:0007669"/>
    <property type="project" value="UniProtKB-UniRule"/>
</dbReference>
<dbReference type="GO" id="GO:0009252">
    <property type="term" value="P:peptidoglycan biosynthetic process"/>
    <property type="evidence" value="ECO:0007669"/>
    <property type="project" value="UniProtKB-UniRule"/>
</dbReference>
<dbReference type="GO" id="GO:0008360">
    <property type="term" value="P:regulation of cell shape"/>
    <property type="evidence" value="ECO:0007669"/>
    <property type="project" value="UniProtKB-KW"/>
</dbReference>
<dbReference type="GO" id="GO:0006048">
    <property type="term" value="P:UDP-N-acetylglucosamine biosynthetic process"/>
    <property type="evidence" value="ECO:0007669"/>
    <property type="project" value="UniProtKB-UniPathway"/>
</dbReference>
<dbReference type="CDD" id="cd11378">
    <property type="entry name" value="DUF296"/>
    <property type="match status" value="1"/>
</dbReference>
<dbReference type="CDD" id="cd02540">
    <property type="entry name" value="GT2_GlmU_N_bac"/>
    <property type="match status" value="1"/>
</dbReference>
<dbReference type="CDD" id="cd03353">
    <property type="entry name" value="LbH_GlmU_C"/>
    <property type="match status" value="1"/>
</dbReference>
<dbReference type="Gene3D" id="2.160.10.10">
    <property type="entry name" value="Hexapeptide repeat proteins"/>
    <property type="match status" value="1"/>
</dbReference>
<dbReference type="Gene3D" id="3.30.1330.80">
    <property type="entry name" value="Hypothetical protein, similar to alpha- acetolactate decarboxylase, domain 2"/>
    <property type="match status" value="1"/>
</dbReference>
<dbReference type="Gene3D" id="3.90.550.10">
    <property type="entry name" value="Spore Coat Polysaccharide Biosynthesis Protein SpsA, Chain A"/>
    <property type="match status" value="1"/>
</dbReference>
<dbReference type="HAMAP" id="MF_01631">
    <property type="entry name" value="GlmU"/>
    <property type="match status" value="1"/>
</dbReference>
<dbReference type="InterPro" id="IPR005882">
    <property type="entry name" value="Bifunctional_GlmU"/>
</dbReference>
<dbReference type="InterPro" id="IPR050065">
    <property type="entry name" value="GlmU-like"/>
</dbReference>
<dbReference type="InterPro" id="IPR038009">
    <property type="entry name" value="GlmU_C_LbH"/>
</dbReference>
<dbReference type="InterPro" id="IPR001451">
    <property type="entry name" value="Hexapep"/>
</dbReference>
<dbReference type="InterPro" id="IPR025877">
    <property type="entry name" value="MobA-like_NTP_Trfase"/>
</dbReference>
<dbReference type="InterPro" id="IPR029044">
    <property type="entry name" value="Nucleotide-diphossugar_trans"/>
</dbReference>
<dbReference type="InterPro" id="IPR005175">
    <property type="entry name" value="PPC_dom"/>
</dbReference>
<dbReference type="InterPro" id="IPR011004">
    <property type="entry name" value="Trimer_LpxA-like_sf"/>
</dbReference>
<dbReference type="NCBIfam" id="TIGR01173">
    <property type="entry name" value="glmU"/>
    <property type="match status" value="1"/>
</dbReference>
<dbReference type="NCBIfam" id="NF010940">
    <property type="entry name" value="PRK14360.1"/>
    <property type="match status" value="1"/>
</dbReference>
<dbReference type="PANTHER" id="PTHR43584:SF3">
    <property type="entry name" value="BIFUNCTIONAL PROTEIN GLMU"/>
    <property type="match status" value="1"/>
</dbReference>
<dbReference type="PANTHER" id="PTHR43584">
    <property type="entry name" value="NUCLEOTIDYL TRANSFERASE"/>
    <property type="match status" value="1"/>
</dbReference>
<dbReference type="Pfam" id="PF00132">
    <property type="entry name" value="Hexapep"/>
    <property type="match status" value="1"/>
</dbReference>
<dbReference type="Pfam" id="PF12804">
    <property type="entry name" value="NTP_transf_3"/>
    <property type="match status" value="1"/>
</dbReference>
<dbReference type="Pfam" id="PF03479">
    <property type="entry name" value="PCC"/>
    <property type="match status" value="1"/>
</dbReference>
<dbReference type="SUPFAM" id="SSF117856">
    <property type="entry name" value="AF0104/ALDC/Ptd012-like"/>
    <property type="match status" value="1"/>
</dbReference>
<dbReference type="SUPFAM" id="SSF53448">
    <property type="entry name" value="Nucleotide-diphospho-sugar transferases"/>
    <property type="match status" value="1"/>
</dbReference>
<dbReference type="SUPFAM" id="SSF51161">
    <property type="entry name" value="Trimeric LpxA-like enzymes"/>
    <property type="match status" value="1"/>
</dbReference>
<dbReference type="PROSITE" id="PS51742">
    <property type="entry name" value="PPC"/>
    <property type="match status" value="1"/>
</dbReference>
<protein>
    <recommendedName>
        <fullName evidence="2">Bifunctional protein GlmU</fullName>
    </recommendedName>
    <domain>
        <recommendedName>
            <fullName evidence="2">UDP-N-acetylglucosamine pyrophosphorylase</fullName>
            <ecNumber evidence="2">2.7.7.23</ecNumber>
        </recommendedName>
        <alternativeName>
            <fullName evidence="2">N-acetylglucosamine-1-phosphate uridyltransferase</fullName>
        </alternativeName>
    </domain>
    <domain>
        <recommendedName>
            <fullName evidence="2">Glucosamine-1-phosphate N-acetyltransferase</fullName>
            <ecNumber evidence="2">2.3.1.157</ecNumber>
        </recommendedName>
    </domain>
</protein>
<evidence type="ECO:0000250" key="1"/>
<evidence type="ECO:0000255" key="2">
    <source>
        <dbReference type="HAMAP-Rule" id="MF_01631"/>
    </source>
</evidence>
<evidence type="ECO:0000256" key="3">
    <source>
        <dbReference type="SAM" id="MobiDB-lite"/>
    </source>
</evidence>
<evidence type="ECO:0000305" key="4"/>
<sequence>MAERELSVAILAAGKGTRMRSQLPKVLHKLGSLSLIERLLRTVLTLKPHRCLVVVGYEQEQVRQALREYPVEFVEQAQQLGTGHAVQQLLPVLGGFQGDLLVINGDVPLLRAETLQALVERHRQVNPEVTLLSAQVADPYGYGRVFCDAQQRVLELVEERDCTPAQRQNRRINSGVYCFHWPALAQVLPHLNRNNAQQEYYLTDAVKRVGKAIALDVADPQEIVGVNDRRQLAQAYQILQDRLKEAWMEAGVTFVDPDSSSLEETVELAPDVVIEPQTHLRGVCRIGPGTRLGPGSWIESSEIGSGCHILYSVVSHSRIGNHVWIGPYAHVRPHSQIGDHCRIGNFVETKNAQIGSHSNAAHLAYLGDAKLGSQVNIGAGTIIANYDGQQKHFTEIGDRSKTGANSVLVAPLQVGSDVTIAAGSTIPARYPLPDDCLVIARSRPVVKPGWRLGIRSSRPQEPQPMPPGSLKIYPLRLFPGQDLKQELERLARQQPLQAGFVLSAVGSLSQATLRLADQTGDHLLSERLEILALSGSLCPDGVHLHLTVADARGQTWGGHLRPGCLIYTTAEIVLADSPEYRFSRQPDPATGYLELHIQPVAGDPCWPSPPPQPQQNQQTKPEADNSRPKSLQ</sequence>
<gene>
    <name evidence="2" type="primary">glmU</name>
    <name type="ordered locus">CYB_2635</name>
</gene>
<feature type="chain" id="PRO_0000244314" description="Bifunctional protein GlmU">
    <location>
        <begin position="1"/>
        <end position="632"/>
    </location>
</feature>
<feature type="region of interest" description="Pyrophosphorylase" evidence="1 2">
    <location>
        <begin position="1"/>
        <end position="229"/>
    </location>
</feature>
<feature type="region of interest" description="Linker" evidence="1 2">
    <location>
        <begin position="230"/>
        <end position="250"/>
    </location>
</feature>
<feature type="region of interest" description="N-acetyltransferase" evidence="1 2">
    <location>
        <begin position="251"/>
        <end position="632"/>
    </location>
</feature>
<feature type="region of interest" description="Disordered" evidence="3">
    <location>
        <begin position="600"/>
        <end position="632"/>
    </location>
</feature>
<feature type="compositionally biased region" description="Basic and acidic residues" evidence="3">
    <location>
        <begin position="621"/>
        <end position="632"/>
    </location>
</feature>
<feature type="active site" description="Proton acceptor" evidence="1 2">
    <location>
        <position position="362"/>
    </location>
</feature>
<feature type="binding site" evidence="1 2">
    <location>
        <begin position="11"/>
        <end position="14"/>
    </location>
    <ligand>
        <name>UDP-N-acetyl-alpha-D-glucosamine</name>
        <dbReference type="ChEBI" id="CHEBI:57705"/>
    </ligand>
</feature>
<feature type="binding site" evidence="1 2">
    <location>
        <position position="25"/>
    </location>
    <ligand>
        <name>UDP-N-acetyl-alpha-D-glucosamine</name>
        <dbReference type="ChEBI" id="CHEBI:57705"/>
    </ligand>
</feature>
<feature type="binding site" evidence="1 2">
    <location>
        <position position="76"/>
    </location>
    <ligand>
        <name>UDP-N-acetyl-alpha-D-glucosamine</name>
        <dbReference type="ChEBI" id="CHEBI:57705"/>
    </ligand>
</feature>
<feature type="binding site" evidence="1 2">
    <location>
        <begin position="81"/>
        <end position="82"/>
    </location>
    <ligand>
        <name>UDP-N-acetyl-alpha-D-glucosamine</name>
        <dbReference type="ChEBI" id="CHEBI:57705"/>
    </ligand>
</feature>
<feature type="binding site" evidence="1 2">
    <location>
        <position position="106"/>
    </location>
    <ligand>
        <name>Mg(2+)</name>
        <dbReference type="ChEBI" id="CHEBI:18420"/>
    </ligand>
</feature>
<feature type="binding site" evidence="1 2">
    <location>
        <position position="143"/>
    </location>
    <ligand>
        <name>UDP-N-acetyl-alpha-D-glucosamine</name>
        <dbReference type="ChEBI" id="CHEBI:57705"/>
    </ligand>
</feature>
<feature type="binding site" evidence="1 2">
    <location>
        <position position="158"/>
    </location>
    <ligand>
        <name>UDP-N-acetyl-alpha-D-glucosamine</name>
        <dbReference type="ChEBI" id="CHEBI:57705"/>
    </ligand>
</feature>
<feature type="binding site" evidence="1 2">
    <location>
        <position position="173"/>
    </location>
    <ligand>
        <name>UDP-N-acetyl-alpha-D-glucosamine</name>
        <dbReference type="ChEBI" id="CHEBI:57705"/>
    </ligand>
</feature>
<feature type="binding site" evidence="1 2">
    <location>
        <position position="227"/>
    </location>
    <ligand>
        <name>Mg(2+)</name>
        <dbReference type="ChEBI" id="CHEBI:18420"/>
    </ligand>
</feature>
<feature type="binding site" evidence="1 2">
    <location>
        <position position="227"/>
    </location>
    <ligand>
        <name>UDP-N-acetyl-alpha-D-glucosamine</name>
        <dbReference type="ChEBI" id="CHEBI:57705"/>
    </ligand>
</feature>
<feature type="binding site" evidence="2">
    <location>
        <position position="332"/>
    </location>
    <ligand>
        <name>UDP-N-acetyl-alpha-D-glucosamine</name>
        <dbReference type="ChEBI" id="CHEBI:57705"/>
    </ligand>
</feature>
<feature type="binding site" evidence="2">
    <location>
        <position position="350"/>
    </location>
    <ligand>
        <name>UDP-N-acetyl-alpha-D-glucosamine</name>
        <dbReference type="ChEBI" id="CHEBI:57705"/>
    </ligand>
</feature>
<feature type="binding site" evidence="2">
    <location>
        <position position="365"/>
    </location>
    <ligand>
        <name>UDP-N-acetyl-alpha-D-glucosamine</name>
        <dbReference type="ChEBI" id="CHEBI:57705"/>
    </ligand>
</feature>
<feature type="binding site" evidence="2">
    <location>
        <position position="376"/>
    </location>
    <ligand>
        <name>UDP-N-acetyl-alpha-D-glucosamine</name>
        <dbReference type="ChEBI" id="CHEBI:57705"/>
    </ligand>
</feature>
<feature type="binding site" evidence="2">
    <location>
        <position position="379"/>
    </location>
    <ligand>
        <name>acetyl-CoA</name>
        <dbReference type="ChEBI" id="CHEBI:57288"/>
    </ligand>
</feature>
<feature type="binding site" evidence="1 2">
    <location>
        <begin position="385"/>
        <end position="386"/>
    </location>
    <ligand>
        <name>acetyl-CoA</name>
        <dbReference type="ChEBI" id="CHEBI:57288"/>
    </ligand>
</feature>
<feature type="binding site" evidence="1 2">
    <location>
        <position position="422"/>
    </location>
    <ligand>
        <name>acetyl-CoA</name>
        <dbReference type="ChEBI" id="CHEBI:57288"/>
    </ligand>
</feature>
<feature type="binding site" evidence="1 2">
    <location>
        <position position="441"/>
    </location>
    <ligand>
        <name>acetyl-CoA</name>
        <dbReference type="ChEBI" id="CHEBI:57288"/>
    </ligand>
</feature>
<comment type="function">
    <text evidence="2">Catalyzes the last two sequential reactions in the de novo biosynthetic pathway for UDP-N-acetylglucosamine (UDP-GlcNAc). The C-terminal domain catalyzes the transfer of acetyl group from acetyl coenzyme A to glucosamine-1-phosphate (GlcN-1-P) to produce N-acetylglucosamine-1-phosphate (GlcNAc-1-P), which is converted into UDP-GlcNAc by the transfer of uridine 5-monophosphate (from uridine 5-triphosphate), a reaction catalyzed by the N-terminal domain.</text>
</comment>
<comment type="catalytic activity">
    <reaction evidence="2">
        <text>alpha-D-glucosamine 1-phosphate + acetyl-CoA = N-acetyl-alpha-D-glucosamine 1-phosphate + CoA + H(+)</text>
        <dbReference type="Rhea" id="RHEA:13725"/>
        <dbReference type="ChEBI" id="CHEBI:15378"/>
        <dbReference type="ChEBI" id="CHEBI:57287"/>
        <dbReference type="ChEBI" id="CHEBI:57288"/>
        <dbReference type="ChEBI" id="CHEBI:57776"/>
        <dbReference type="ChEBI" id="CHEBI:58516"/>
        <dbReference type="EC" id="2.3.1.157"/>
    </reaction>
</comment>
<comment type="catalytic activity">
    <reaction evidence="2">
        <text>N-acetyl-alpha-D-glucosamine 1-phosphate + UTP + H(+) = UDP-N-acetyl-alpha-D-glucosamine + diphosphate</text>
        <dbReference type="Rhea" id="RHEA:13509"/>
        <dbReference type="ChEBI" id="CHEBI:15378"/>
        <dbReference type="ChEBI" id="CHEBI:33019"/>
        <dbReference type="ChEBI" id="CHEBI:46398"/>
        <dbReference type="ChEBI" id="CHEBI:57705"/>
        <dbReference type="ChEBI" id="CHEBI:57776"/>
        <dbReference type="EC" id="2.7.7.23"/>
    </reaction>
</comment>
<comment type="cofactor">
    <cofactor evidence="1 2">
        <name>Mg(2+)</name>
        <dbReference type="ChEBI" id="CHEBI:18420"/>
    </cofactor>
    <text evidence="1 2">Binds 1 Mg(2+) ion per subunit.</text>
</comment>
<comment type="pathway">
    <text evidence="2">Nucleotide-sugar biosynthesis; UDP-N-acetyl-alpha-D-glucosamine biosynthesis; N-acetyl-alpha-D-glucosamine 1-phosphate from alpha-D-glucosamine 6-phosphate (route II): step 2/2.</text>
</comment>
<comment type="pathway">
    <text evidence="2">Nucleotide-sugar biosynthesis; UDP-N-acetyl-alpha-D-glucosamine biosynthesis; UDP-N-acetyl-alpha-D-glucosamine from N-acetyl-alpha-D-glucosamine 1-phosphate: step 1/1.</text>
</comment>
<comment type="pathway">
    <text evidence="2">Bacterial outer membrane biogenesis; LPS lipid A biosynthesis.</text>
</comment>
<comment type="subunit">
    <text evidence="1 2">Homotrimer.</text>
</comment>
<comment type="subcellular location">
    <subcellularLocation>
        <location evidence="1 2">Cytoplasm</location>
    </subcellularLocation>
</comment>
<comment type="similarity">
    <text evidence="2 4">In the N-terminal section; belongs to the N-acetylglucosamine-1-phosphate uridyltransferase family.</text>
</comment>
<comment type="similarity">
    <text evidence="2 4">In the C-terminal section; belongs to the transferase hexapeptide repeat family.</text>
</comment>
<reference key="1">
    <citation type="journal article" date="2007" name="ISME J.">
        <title>Population level functional diversity in a microbial community revealed by comparative genomic and metagenomic analyses.</title>
        <authorList>
            <person name="Bhaya D."/>
            <person name="Grossman A.R."/>
            <person name="Steunou A.-S."/>
            <person name="Khuri N."/>
            <person name="Cohan F.M."/>
            <person name="Hamamura N."/>
            <person name="Melendrez M.C."/>
            <person name="Bateson M.M."/>
            <person name="Ward D.M."/>
            <person name="Heidelberg J.F."/>
        </authorList>
    </citation>
    <scope>NUCLEOTIDE SEQUENCE [LARGE SCALE GENOMIC DNA]</scope>
    <source>
        <strain>JA-2-3B'a(2-13)</strain>
    </source>
</reference>
<keyword id="KW-0012">Acyltransferase</keyword>
<keyword id="KW-0133">Cell shape</keyword>
<keyword id="KW-0961">Cell wall biogenesis/degradation</keyword>
<keyword id="KW-0963">Cytoplasm</keyword>
<keyword id="KW-0460">Magnesium</keyword>
<keyword id="KW-0479">Metal-binding</keyword>
<keyword id="KW-0511">Multifunctional enzyme</keyword>
<keyword id="KW-0548">Nucleotidyltransferase</keyword>
<keyword id="KW-0573">Peptidoglycan synthesis</keyword>
<keyword id="KW-1185">Reference proteome</keyword>
<keyword id="KW-0677">Repeat</keyword>
<keyword id="KW-0808">Transferase</keyword>
<proteinExistence type="inferred from homology"/>
<organism>
    <name type="scientific">Synechococcus sp. (strain JA-2-3B'a(2-13))</name>
    <name type="common">Cyanobacteria bacterium Yellowstone B-Prime</name>
    <dbReference type="NCBI Taxonomy" id="321332"/>
    <lineage>
        <taxon>Bacteria</taxon>
        <taxon>Bacillati</taxon>
        <taxon>Cyanobacteriota</taxon>
        <taxon>Cyanophyceae</taxon>
        <taxon>Synechococcales</taxon>
        <taxon>Synechococcaceae</taxon>
        <taxon>Synechococcus</taxon>
    </lineage>
</organism>
<name>GLMU_SYNJB</name>